<accession>A2C555</accession>
<sequence>MSHAVKIYDTCIGCTQCVRACPLDVLEMVPWDGCKASQIASSPRTEDCVGCKRCETACPTDFLSIRVYLGDETTRSMGLAY</sequence>
<reference key="1">
    <citation type="journal article" date="2007" name="PLoS Genet.">
        <title>Patterns and implications of gene gain and loss in the evolution of Prochlorococcus.</title>
        <authorList>
            <person name="Kettler G.C."/>
            <person name="Martiny A.C."/>
            <person name="Huang K."/>
            <person name="Zucker J."/>
            <person name="Coleman M.L."/>
            <person name="Rodrigue S."/>
            <person name="Chen F."/>
            <person name="Lapidus A."/>
            <person name="Ferriera S."/>
            <person name="Johnson J."/>
            <person name="Steglich C."/>
            <person name="Church G.M."/>
            <person name="Richardson P."/>
            <person name="Chisholm S.W."/>
        </authorList>
    </citation>
    <scope>NUCLEOTIDE SEQUENCE [LARGE SCALE GENOMIC DNA]</scope>
    <source>
        <strain>NATL1A</strain>
    </source>
</reference>
<comment type="function">
    <text evidence="2">Apoprotein for the two 4Fe-4S centers FA and FB of photosystem I (PSI); essential for photochemical activity. FB is the terminal electron acceptor of PSI, donating electrons to ferredoxin. The C-terminus interacts with PsaA/B/D and helps assemble the protein into the PSI complex. Required for binding of PsaD and PsaE to PSI. PSI is a plastocyanin/cytochrome c6-ferredoxin oxidoreductase, converting photonic excitation into a charge separation, which transfers an electron from the donor P700 chlorophyll pair to the spectroscopically characterized acceptors A0, A1, FX, FA and FB in turn.</text>
</comment>
<comment type="catalytic activity">
    <reaction evidence="2">
        <text>reduced [plastocyanin] + hnu + oxidized [2Fe-2S]-[ferredoxin] = oxidized [plastocyanin] + reduced [2Fe-2S]-[ferredoxin]</text>
        <dbReference type="Rhea" id="RHEA:30407"/>
        <dbReference type="Rhea" id="RHEA-COMP:10000"/>
        <dbReference type="Rhea" id="RHEA-COMP:10001"/>
        <dbReference type="Rhea" id="RHEA-COMP:10039"/>
        <dbReference type="Rhea" id="RHEA-COMP:10040"/>
        <dbReference type="ChEBI" id="CHEBI:29036"/>
        <dbReference type="ChEBI" id="CHEBI:30212"/>
        <dbReference type="ChEBI" id="CHEBI:33737"/>
        <dbReference type="ChEBI" id="CHEBI:33738"/>
        <dbReference type="ChEBI" id="CHEBI:49552"/>
        <dbReference type="EC" id="1.97.1.12"/>
    </reaction>
</comment>
<comment type="cofactor">
    <cofactor evidence="2">
        <name>[4Fe-4S] cluster</name>
        <dbReference type="ChEBI" id="CHEBI:49883"/>
    </cofactor>
    <text evidence="2">Binds 2 [4Fe-4S] clusters. Cluster 2 is most probably the spectroscopically characterized electron acceptor FA and cluster 1 is most probably FB.</text>
</comment>
<comment type="subunit">
    <text evidence="2">The cyanobacterial PSI reaction center is composed of one copy each of PsaA,B,C,D,E,F,I,J,K,L,M and X, and forms trimeric complexes.</text>
</comment>
<comment type="subcellular location">
    <subcellularLocation>
        <location evidence="2">Cellular thylakoid membrane</location>
        <topology evidence="2">Peripheral membrane protein</topology>
        <orientation evidence="2">Cytoplasmic side</orientation>
    </subcellularLocation>
</comment>
<evidence type="ECO:0000250" key="1"/>
<evidence type="ECO:0000255" key="2">
    <source>
        <dbReference type="HAMAP-Rule" id="MF_01303"/>
    </source>
</evidence>
<name>PSAC_PROM1</name>
<organism>
    <name type="scientific">Prochlorococcus marinus (strain NATL1A)</name>
    <dbReference type="NCBI Taxonomy" id="167555"/>
    <lineage>
        <taxon>Bacteria</taxon>
        <taxon>Bacillati</taxon>
        <taxon>Cyanobacteriota</taxon>
        <taxon>Cyanophyceae</taxon>
        <taxon>Synechococcales</taxon>
        <taxon>Prochlorococcaceae</taxon>
        <taxon>Prochlorococcus</taxon>
    </lineage>
</organism>
<keyword id="KW-0004">4Fe-4S</keyword>
<keyword id="KW-0249">Electron transport</keyword>
<keyword id="KW-0408">Iron</keyword>
<keyword id="KW-0411">Iron-sulfur</keyword>
<keyword id="KW-0472">Membrane</keyword>
<keyword id="KW-0479">Metal-binding</keyword>
<keyword id="KW-0560">Oxidoreductase</keyword>
<keyword id="KW-0602">Photosynthesis</keyword>
<keyword id="KW-0603">Photosystem I</keyword>
<keyword id="KW-0677">Repeat</keyword>
<keyword id="KW-0793">Thylakoid</keyword>
<keyword id="KW-0813">Transport</keyword>
<proteinExistence type="inferred from homology"/>
<feature type="initiator methionine" description="Removed" evidence="1">
    <location>
        <position position="1"/>
    </location>
</feature>
<feature type="chain" id="PRO_0000292102" description="Photosystem I iron-sulfur center">
    <location>
        <begin position="2"/>
        <end position="81"/>
    </location>
</feature>
<feature type="domain" description="4Fe-4S ferredoxin-type 1" evidence="2">
    <location>
        <begin position="2"/>
        <end position="31"/>
    </location>
</feature>
<feature type="domain" description="4Fe-4S ferredoxin-type 2" evidence="2">
    <location>
        <begin position="39"/>
        <end position="68"/>
    </location>
</feature>
<feature type="binding site" evidence="2">
    <location>
        <position position="11"/>
    </location>
    <ligand>
        <name>[4Fe-4S] cluster</name>
        <dbReference type="ChEBI" id="CHEBI:49883"/>
        <label>1</label>
    </ligand>
</feature>
<feature type="binding site" evidence="2">
    <location>
        <position position="14"/>
    </location>
    <ligand>
        <name>[4Fe-4S] cluster</name>
        <dbReference type="ChEBI" id="CHEBI:49883"/>
        <label>1</label>
    </ligand>
</feature>
<feature type="binding site" evidence="2">
    <location>
        <position position="17"/>
    </location>
    <ligand>
        <name>[4Fe-4S] cluster</name>
        <dbReference type="ChEBI" id="CHEBI:49883"/>
        <label>1</label>
    </ligand>
</feature>
<feature type="binding site" evidence="2">
    <location>
        <position position="21"/>
    </location>
    <ligand>
        <name>[4Fe-4S] cluster</name>
        <dbReference type="ChEBI" id="CHEBI:49883"/>
        <label>2</label>
    </ligand>
</feature>
<feature type="binding site" evidence="2">
    <location>
        <position position="48"/>
    </location>
    <ligand>
        <name>[4Fe-4S] cluster</name>
        <dbReference type="ChEBI" id="CHEBI:49883"/>
        <label>2</label>
    </ligand>
</feature>
<feature type="binding site" evidence="2">
    <location>
        <position position="51"/>
    </location>
    <ligand>
        <name>[4Fe-4S] cluster</name>
        <dbReference type="ChEBI" id="CHEBI:49883"/>
        <label>2</label>
    </ligand>
</feature>
<feature type="binding site" evidence="2">
    <location>
        <position position="54"/>
    </location>
    <ligand>
        <name>[4Fe-4S] cluster</name>
        <dbReference type="ChEBI" id="CHEBI:49883"/>
        <label>2</label>
    </ligand>
</feature>
<feature type="binding site" evidence="2">
    <location>
        <position position="58"/>
    </location>
    <ligand>
        <name>[4Fe-4S] cluster</name>
        <dbReference type="ChEBI" id="CHEBI:49883"/>
        <label>1</label>
    </ligand>
</feature>
<gene>
    <name evidence="2" type="primary">psaC</name>
    <name type="ordered locus">NATL1_20591</name>
</gene>
<protein>
    <recommendedName>
        <fullName evidence="2">Photosystem I iron-sulfur center</fullName>
        <ecNumber evidence="2">1.97.1.12</ecNumber>
    </recommendedName>
    <alternativeName>
        <fullName evidence="2">9 kDa polypeptide</fullName>
    </alternativeName>
    <alternativeName>
        <fullName evidence="2">PSI-C</fullName>
    </alternativeName>
    <alternativeName>
        <fullName evidence="2">Photosystem I subunit VII</fullName>
    </alternativeName>
    <alternativeName>
        <fullName evidence="2">PsaC</fullName>
    </alternativeName>
</protein>
<dbReference type="EC" id="1.97.1.12" evidence="2"/>
<dbReference type="EMBL" id="CP000553">
    <property type="protein sequence ID" value="ABM76615.1"/>
    <property type="molecule type" value="Genomic_DNA"/>
</dbReference>
<dbReference type="RefSeq" id="WP_011295528.1">
    <property type="nucleotide sequence ID" value="NC_008819.1"/>
</dbReference>
<dbReference type="SMR" id="A2C555"/>
<dbReference type="KEGG" id="pme:NATL1_20591"/>
<dbReference type="eggNOG" id="COG1143">
    <property type="taxonomic scope" value="Bacteria"/>
</dbReference>
<dbReference type="HOGENOM" id="CLU_139698_8_0_3"/>
<dbReference type="Proteomes" id="UP000002592">
    <property type="component" value="Chromosome"/>
</dbReference>
<dbReference type="GO" id="GO:0009522">
    <property type="term" value="C:photosystem I"/>
    <property type="evidence" value="ECO:0007669"/>
    <property type="project" value="UniProtKB-KW"/>
</dbReference>
<dbReference type="GO" id="GO:0031676">
    <property type="term" value="C:plasma membrane-derived thylakoid membrane"/>
    <property type="evidence" value="ECO:0007669"/>
    <property type="project" value="UniProtKB-SubCell"/>
</dbReference>
<dbReference type="GO" id="GO:0051539">
    <property type="term" value="F:4 iron, 4 sulfur cluster binding"/>
    <property type="evidence" value="ECO:0007669"/>
    <property type="project" value="UniProtKB-KW"/>
</dbReference>
<dbReference type="GO" id="GO:0009055">
    <property type="term" value="F:electron transfer activity"/>
    <property type="evidence" value="ECO:0007669"/>
    <property type="project" value="UniProtKB-UniRule"/>
</dbReference>
<dbReference type="GO" id="GO:0046872">
    <property type="term" value="F:metal ion binding"/>
    <property type="evidence" value="ECO:0007669"/>
    <property type="project" value="UniProtKB-KW"/>
</dbReference>
<dbReference type="GO" id="GO:0016491">
    <property type="term" value="F:oxidoreductase activity"/>
    <property type="evidence" value="ECO:0007669"/>
    <property type="project" value="UniProtKB-KW"/>
</dbReference>
<dbReference type="GO" id="GO:0009773">
    <property type="term" value="P:photosynthetic electron transport in photosystem I"/>
    <property type="evidence" value="ECO:0007669"/>
    <property type="project" value="InterPro"/>
</dbReference>
<dbReference type="FunFam" id="3.30.70.20:FF:000001">
    <property type="entry name" value="Photosystem I iron-sulfur center"/>
    <property type="match status" value="1"/>
</dbReference>
<dbReference type="Gene3D" id="3.30.70.20">
    <property type="match status" value="1"/>
</dbReference>
<dbReference type="HAMAP" id="MF_01303">
    <property type="entry name" value="PSI_PsaC"/>
    <property type="match status" value="1"/>
</dbReference>
<dbReference type="InterPro" id="IPR017896">
    <property type="entry name" value="4Fe4S_Fe-S-bd"/>
</dbReference>
<dbReference type="InterPro" id="IPR017900">
    <property type="entry name" value="4Fe4S_Fe_S_CS"/>
</dbReference>
<dbReference type="InterPro" id="IPR050157">
    <property type="entry name" value="PSI_iron-sulfur_center"/>
</dbReference>
<dbReference type="InterPro" id="IPR017491">
    <property type="entry name" value="PSI_PsaC"/>
</dbReference>
<dbReference type="NCBIfam" id="TIGR03048">
    <property type="entry name" value="PS_I_psaC"/>
    <property type="match status" value="1"/>
</dbReference>
<dbReference type="PANTHER" id="PTHR24960:SF79">
    <property type="entry name" value="PHOTOSYSTEM I IRON-SULFUR CENTER"/>
    <property type="match status" value="1"/>
</dbReference>
<dbReference type="PANTHER" id="PTHR24960">
    <property type="entry name" value="PHOTOSYSTEM I IRON-SULFUR CENTER-RELATED"/>
    <property type="match status" value="1"/>
</dbReference>
<dbReference type="Pfam" id="PF12838">
    <property type="entry name" value="Fer4_7"/>
    <property type="match status" value="1"/>
</dbReference>
<dbReference type="SUPFAM" id="SSF54862">
    <property type="entry name" value="4Fe-4S ferredoxins"/>
    <property type="match status" value="1"/>
</dbReference>
<dbReference type="PROSITE" id="PS00198">
    <property type="entry name" value="4FE4S_FER_1"/>
    <property type="match status" value="2"/>
</dbReference>
<dbReference type="PROSITE" id="PS51379">
    <property type="entry name" value="4FE4S_FER_2"/>
    <property type="match status" value="2"/>
</dbReference>